<organism>
    <name type="scientific">Mycolicibacterium aurum</name>
    <name type="common">Mycobacterium aurum</name>
    <dbReference type="NCBI Taxonomy" id="1791"/>
    <lineage>
        <taxon>Bacteria</taxon>
        <taxon>Bacillati</taxon>
        <taxon>Actinomycetota</taxon>
        <taxon>Actinomycetes</taxon>
        <taxon>Mycobacteriales</taxon>
        <taxon>Mycobacteriaceae</taxon>
        <taxon>Mycolicibacterium</taxon>
    </lineage>
</organism>
<sequence length="97" mass="10537">MAASQQEIIAGLAEIIEEVTGIEPSEVTPEKSFVDDLDIDSLSMVEIAVQTEDKYGVKIPDEDLAGLRTVGDVVAYIQKLEEENPEAAAALREKFAE</sequence>
<feature type="chain" id="PRO_0000180245" description="Meromycolate extension acyl carrier protein">
    <location>
        <begin position="1"/>
        <end position="97"/>
    </location>
</feature>
<feature type="domain" description="Carrier" evidence="2">
    <location>
        <begin position="3"/>
        <end position="81"/>
    </location>
</feature>
<feature type="modified residue" description="O-(pantetheine 4'-phosphoryl)serine" evidence="2">
    <location>
        <position position="41"/>
    </location>
</feature>
<proteinExistence type="inferred from homology"/>
<comment type="function">
    <text>Acyl carrier protein involved in meromycolate extension.</text>
</comment>
<comment type="subcellular location">
    <subcellularLocation>
        <location evidence="1">Cytoplasm</location>
    </subcellularLocation>
</comment>
<comment type="PTM">
    <text evidence="3">4'-phosphopantetheine is transferred from CoA to a specific serine of apo-AcpM.</text>
</comment>
<comment type="similarity">
    <text evidence="3">Belongs to the acyl carrier protein (ACP) family.</text>
</comment>
<name>ACPM_MYCAU</name>
<evidence type="ECO:0000250" key="1"/>
<evidence type="ECO:0000255" key="2">
    <source>
        <dbReference type="PROSITE-ProRule" id="PRU00258"/>
    </source>
</evidence>
<evidence type="ECO:0000305" key="3"/>
<accession>P61156</accession>
<keyword id="KW-0963">Cytoplasm</keyword>
<keyword id="KW-0275">Fatty acid biosynthesis</keyword>
<keyword id="KW-0276">Fatty acid metabolism</keyword>
<keyword id="KW-0444">Lipid biosynthesis</keyword>
<keyword id="KW-0443">Lipid metabolism</keyword>
<keyword id="KW-0596">Phosphopantetheine</keyword>
<keyword id="KW-0597">Phosphoprotein</keyword>
<protein>
    <recommendedName>
        <fullName>Meromycolate extension acyl carrier protein</fullName>
        <shortName>ACP</shortName>
    </recommendedName>
</protein>
<dbReference type="EMBL" id="DQ268649">
    <property type="protein sequence ID" value="AAS59403.2"/>
    <property type="molecule type" value="Genomic_DNA"/>
</dbReference>
<dbReference type="SMR" id="P61156"/>
<dbReference type="STRING" id="1791.GCA_001049355_01904"/>
<dbReference type="GO" id="GO:0005829">
    <property type="term" value="C:cytosol"/>
    <property type="evidence" value="ECO:0007669"/>
    <property type="project" value="TreeGrafter"/>
</dbReference>
<dbReference type="GO" id="GO:0016020">
    <property type="term" value="C:membrane"/>
    <property type="evidence" value="ECO:0007669"/>
    <property type="project" value="GOC"/>
</dbReference>
<dbReference type="GO" id="GO:0000035">
    <property type="term" value="F:acyl binding"/>
    <property type="evidence" value="ECO:0007669"/>
    <property type="project" value="TreeGrafter"/>
</dbReference>
<dbReference type="GO" id="GO:0000036">
    <property type="term" value="F:acyl carrier activity"/>
    <property type="evidence" value="ECO:0007669"/>
    <property type="project" value="UniProtKB-UniRule"/>
</dbReference>
<dbReference type="GO" id="GO:0009245">
    <property type="term" value="P:lipid A biosynthetic process"/>
    <property type="evidence" value="ECO:0007669"/>
    <property type="project" value="TreeGrafter"/>
</dbReference>
<dbReference type="FunFam" id="1.10.1200.10:FF:000010">
    <property type="entry name" value="Acyl carrier protein"/>
    <property type="match status" value="1"/>
</dbReference>
<dbReference type="Gene3D" id="1.10.1200.10">
    <property type="entry name" value="ACP-like"/>
    <property type="match status" value="1"/>
</dbReference>
<dbReference type="HAMAP" id="MF_01217">
    <property type="entry name" value="Acyl_carrier"/>
    <property type="match status" value="1"/>
</dbReference>
<dbReference type="InterPro" id="IPR003231">
    <property type="entry name" value="ACP"/>
</dbReference>
<dbReference type="InterPro" id="IPR036736">
    <property type="entry name" value="ACP-like_sf"/>
</dbReference>
<dbReference type="InterPro" id="IPR053393">
    <property type="entry name" value="Meromycolate-ACP"/>
</dbReference>
<dbReference type="InterPro" id="IPR009081">
    <property type="entry name" value="PP-bd_ACP"/>
</dbReference>
<dbReference type="NCBIfam" id="NF040636">
    <property type="entry name" value="AcpM"/>
    <property type="match status" value="1"/>
</dbReference>
<dbReference type="NCBIfam" id="NF002147">
    <property type="entry name" value="PRK00982.1-1"/>
    <property type="match status" value="1"/>
</dbReference>
<dbReference type="NCBIfam" id="NF002148">
    <property type="entry name" value="PRK00982.1-2"/>
    <property type="match status" value="1"/>
</dbReference>
<dbReference type="NCBIfam" id="NF002150">
    <property type="entry name" value="PRK00982.1-4"/>
    <property type="match status" value="1"/>
</dbReference>
<dbReference type="PANTHER" id="PTHR20863">
    <property type="entry name" value="ACYL CARRIER PROTEIN"/>
    <property type="match status" value="1"/>
</dbReference>
<dbReference type="PANTHER" id="PTHR20863:SF76">
    <property type="entry name" value="CARRIER DOMAIN-CONTAINING PROTEIN"/>
    <property type="match status" value="1"/>
</dbReference>
<dbReference type="Pfam" id="PF00550">
    <property type="entry name" value="PP-binding"/>
    <property type="match status" value="1"/>
</dbReference>
<dbReference type="SUPFAM" id="SSF47336">
    <property type="entry name" value="ACP-like"/>
    <property type="match status" value="1"/>
</dbReference>
<dbReference type="PROSITE" id="PS50075">
    <property type="entry name" value="CARRIER"/>
    <property type="match status" value="1"/>
</dbReference>
<reference key="1">
    <citation type="submission" date="2005-10" db="EMBL/GenBank/DDBJ databases">
        <title>Mycobacterium aurum acpM gene sequence.</title>
        <authorList>
            <person name="Bansal T.K."/>
            <person name="Prabha G."/>
            <person name="Singh A.K."/>
            <person name="Gupta N."/>
            <person name="Singh B.N."/>
        </authorList>
    </citation>
    <scope>NUCLEOTIDE SEQUENCE [GENOMIC DNA]</scope>
</reference>
<gene>
    <name type="primary">acpM</name>
</gene>